<protein>
    <recommendedName>
        <fullName>UPF0337 protein BT9727_3385</fullName>
    </recommendedName>
</protein>
<feature type="chain" id="PRO_0000209986" description="UPF0337 protein BT9727_3385">
    <location>
        <begin position="1"/>
        <end position="70"/>
    </location>
</feature>
<evidence type="ECO:0000305" key="1"/>
<proteinExistence type="inferred from homology"/>
<sequence length="70" mass="7940">MTKHDHGLKEKVEGTIDKVKGEVKEVVGKVTDNKKLQAEGKWDKVKGTAKDTVGNVKEKVHEYKEHKENK</sequence>
<name>Y3385_BACHK</name>
<organism>
    <name type="scientific">Bacillus thuringiensis subsp. konkukian (strain 97-27)</name>
    <dbReference type="NCBI Taxonomy" id="281309"/>
    <lineage>
        <taxon>Bacteria</taxon>
        <taxon>Bacillati</taxon>
        <taxon>Bacillota</taxon>
        <taxon>Bacilli</taxon>
        <taxon>Bacillales</taxon>
        <taxon>Bacillaceae</taxon>
        <taxon>Bacillus</taxon>
        <taxon>Bacillus cereus group</taxon>
    </lineage>
</organism>
<accession>Q6HFG9</accession>
<reference key="1">
    <citation type="journal article" date="2006" name="J. Bacteriol.">
        <title>Pathogenomic sequence analysis of Bacillus cereus and Bacillus thuringiensis isolates closely related to Bacillus anthracis.</title>
        <authorList>
            <person name="Han C.S."/>
            <person name="Xie G."/>
            <person name="Challacombe J.F."/>
            <person name="Altherr M.R."/>
            <person name="Bhotika S.S."/>
            <person name="Bruce D."/>
            <person name="Campbell C.S."/>
            <person name="Campbell M.L."/>
            <person name="Chen J."/>
            <person name="Chertkov O."/>
            <person name="Cleland C."/>
            <person name="Dimitrijevic M."/>
            <person name="Doggett N.A."/>
            <person name="Fawcett J.J."/>
            <person name="Glavina T."/>
            <person name="Goodwin L.A."/>
            <person name="Hill K.K."/>
            <person name="Hitchcock P."/>
            <person name="Jackson P.J."/>
            <person name="Keim P."/>
            <person name="Kewalramani A.R."/>
            <person name="Longmire J."/>
            <person name="Lucas S."/>
            <person name="Malfatti S."/>
            <person name="McMurry K."/>
            <person name="Meincke L.J."/>
            <person name="Misra M."/>
            <person name="Moseman B.L."/>
            <person name="Mundt M."/>
            <person name="Munk A.C."/>
            <person name="Okinaka R.T."/>
            <person name="Parson-Quintana B."/>
            <person name="Reilly L.P."/>
            <person name="Richardson P."/>
            <person name="Robinson D.L."/>
            <person name="Rubin E."/>
            <person name="Saunders E."/>
            <person name="Tapia R."/>
            <person name="Tesmer J.G."/>
            <person name="Thayer N."/>
            <person name="Thompson L.S."/>
            <person name="Tice H."/>
            <person name="Ticknor L.O."/>
            <person name="Wills P.L."/>
            <person name="Brettin T.S."/>
            <person name="Gilna P."/>
        </authorList>
    </citation>
    <scope>NUCLEOTIDE SEQUENCE [LARGE SCALE GENOMIC DNA]</scope>
    <source>
        <strain>97-27</strain>
    </source>
</reference>
<dbReference type="EMBL" id="AE017355">
    <property type="protein sequence ID" value="AAT61651.1"/>
    <property type="molecule type" value="Genomic_DNA"/>
</dbReference>
<dbReference type="RefSeq" id="WP_000160420.1">
    <property type="nucleotide sequence ID" value="NC_005957.1"/>
</dbReference>
<dbReference type="RefSeq" id="YP_037707.1">
    <property type="nucleotide sequence ID" value="NC_005957.1"/>
</dbReference>
<dbReference type="SMR" id="Q6HFG9"/>
<dbReference type="KEGG" id="btk:BT9727_3385"/>
<dbReference type="PATRIC" id="fig|281309.8.peg.3612"/>
<dbReference type="HOGENOM" id="CLU_135567_3_0_9"/>
<dbReference type="Proteomes" id="UP000001301">
    <property type="component" value="Chromosome"/>
</dbReference>
<dbReference type="Gene3D" id="1.10.1470.10">
    <property type="entry name" value="YjbJ"/>
    <property type="match status" value="1"/>
</dbReference>
<dbReference type="InterPro" id="IPR008462">
    <property type="entry name" value="CsbD"/>
</dbReference>
<dbReference type="InterPro" id="IPR050423">
    <property type="entry name" value="UPF0337_stress_rsp"/>
</dbReference>
<dbReference type="InterPro" id="IPR036629">
    <property type="entry name" value="YjbJ_sf"/>
</dbReference>
<dbReference type="PANTHER" id="PTHR34977">
    <property type="entry name" value="UPF0337 PROTEIN YJBJ"/>
    <property type="match status" value="1"/>
</dbReference>
<dbReference type="PANTHER" id="PTHR34977:SF1">
    <property type="entry name" value="UPF0337 PROTEIN YJBJ"/>
    <property type="match status" value="1"/>
</dbReference>
<dbReference type="Pfam" id="PF05532">
    <property type="entry name" value="CsbD"/>
    <property type="match status" value="1"/>
</dbReference>
<dbReference type="SUPFAM" id="SSF69047">
    <property type="entry name" value="Hypothetical protein YjbJ"/>
    <property type="match status" value="1"/>
</dbReference>
<gene>
    <name type="ordered locus">BT9727_3385</name>
</gene>
<comment type="similarity">
    <text evidence="1">Belongs to the UPF0337 (CsbD) family.</text>
</comment>